<keyword id="KW-0067">ATP-binding</keyword>
<keyword id="KW-0418">Kinase</keyword>
<keyword id="KW-0441">Lipid A biosynthesis</keyword>
<keyword id="KW-0444">Lipid biosynthesis</keyword>
<keyword id="KW-0443">Lipid metabolism</keyword>
<keyword id="KW-0547">Nucleotide-binding</keyword>
<keyword id="KW-1185">Reference proteome</keyword>
<keyword id="KW-0808">Transferase</keyword>
<organism>
    <name type="scientific">Escherichia coli (strain K12)</name>
    <dbReference type="NCBI Taxonomy" id="83333"/>
    <lineage>
        <taxon>Bacteria</taxon>
        <taxon>Pseudomonadati</taxon>
        <taxon>Pseudomonadota</taxon>
        <taxon>Gammaproteobacteria</taxon>
        <taxon>Enterobacterales</taxon>
        <taxon>Enterobacteriaceae</taxon>
        <taxon>Escherichia</taxon>
    </lineage>
</organism>
<feature type="chain" id="PRO_0000190924" description="Tetraacyldisaccharide 4'-kinase">
    <location>
        <begin position="1"/>
        <end position="328"/>
    </location>
</feature>
<feature type="binding site" evidence="1">
    <location>
        <begin position="55"/>
        <end position="62"/>
    </location>
    <ligand>
        <name>ATP</name>
        <dbReference type="ChEBI" id="CHEBI:30616"/>
    </ligand>
</feature>
<feature type="sequence conflict" description="In Ref. 1; CAA77840." evidence="4" ref="1">
    <original>D</original>
    <variation>N</variation>
    <location>
        <position position="158"/>
    </location>
</feature>
<sequence length="328" mass="35589">MIEKIWSGESPLWRLLLPLSWLYGLVSGAIRLCYKLKLKRAWRAPVPVVVVGNLTAGGNGKTPVVVWLVEQLQQRGIRVGVVSRGYGGKAESYPLLLSADTTTAQAGDEPVLIYQRTDAPVAVSPVRSDAVKAILAQHPDVQIIVTDDGLQHYRLARDVEIVVIDGVRRFGNGWWLPAGPMRERAGRLKSVDAVIVNGGVPRSGEIPMHLLPGQAVNLRTGTRCDVAQLEHVVAMAGIGHPPRFFATLKMCGVQPEKCVPLADHQSLNHADVSALVSAGQTLVMTEKDAVKCRAFAEENWWYLPVDAQLSGDEPAKLLTQLTLLASGN</sequence>
<dbReference type="EC" id="2.7.1.130" evidence="2"/>
<dbReference type="EMBL" id="Z11796">
    <property type="protein sequence ID" value="CAA77840.1"/>
    <property type="molecule type" value="Genomic_DNA"/>
</dbReference>
<dbReference type="EMBL" id="U00096">
    <property type="protein sequence ID" value="AAC74001.1"/>
    <property type="molecule type" value="Genomic_DNA"/>
</dbReference>
<dbReference type="EMBL" id="AP009048">
    <property type="protein sequence ID" value="BAA35661.1"/>
    <property type="molecule type" value="Genomic_DNA"/>
</dbReference>
<dbReference type="PIR" id="B64831">
    <property type="entry name" value="B64831"/>
</dbReference>
<dbReference type="RefSeq" id="NP_415435.1">
    <property type="nucleotide sequence ID" value="NC_000913.3"/>
</dbReference>
<dbReference type="RefSeq" id="WP_000570539.1">
    <property type="nucleotide sequence ID" value="NZ_SSZK01000002.1"/>
</dbReference>
<dbReference type="RefSeq" id="WP_000570544.1">
    <property type="nucleotide sequence ID" value="NZ_LN832404.1"/>
</dbReference>
<dbReference type="SMR" id="P27300"/>
<dbReference type="BioGRID" id="4260014">
    <property type="interactions" value="329"/>
</dbReference>
<dbReference type="DIP" id="DIP-10126N"/>
<dbReference type="FunCoup" id="P27300">
    <property type="interactions" value="342"/>
</dbReference>
<dbReference type="IntAct" id="P27300">
    <property type="interactions" value="1"/>
</dbReference>
<dbReference type="STRING" id="511145.b0915"/>
<dbReference type="PaxDb" id="511145-b0915"/>
<dbReference type="EnsemblBacteria" id="AAC74001">
    <property type="protein sequence ID" value="AAC74001"/>
    <property type="gene ID" value="b0915"/>
</dbReference>
<dbReference type="GeneID" id="945526"/>
<dbReference type="KEGG" id="ecj:JW0898"/>
<dbReference type="KEGG" id="eco:b0915"/>
<dbReference type="PATRIC" id="fig|511145.12.peg.946"/>
<dbReference type="EchoBASE" id="EB1381"/>
<dbReference type="eggNOG" id="COG1663">
    <property type="taxonomic scope" value="Bacteria"/>
</dbReference>
<dbReference type="HOGENOM" id="CLU_038816_2_0_6"/>
<dbReference type="InParanoid" id="P27300"/>
<dbReference type="OMA" id="RAFPDHH"/>
<dbReference type="OrthoDB" id="9766423at2"/>
<dbReference type="PhylomeDB" id="P27300"/>
<dbReference type="BioCyc" id="EcoCyc:TETRAACYLDISACC4KIN-MONOMER"/>
<dbReference type="BioCyc" id="MetaCyc:TETRAACYLDISACC4KIN-MONOMER"/>
<dbReference type="BRENDA" id="2.7.1.130">
    <property type="organism ID" value="2026"/>
</dbReference>
<dbReference type="UniPathway" id="UPA00359">
    <property type="reaction ID" value="UER00482"/>
</dbReference>
<dbReference type="PRO" id="PR:P27300"/>
<dbReference type="Proteomes" id="UP000000625">
    <property type="component" value="Chromosome"/>
</dbReference>
<dbReference type="GO" id="GO:0016020">
    <property type="term" value="C:membrane"/>
    <property type="evidence" value="ECO:0000314"/>
    <property type="project" value="EcoliWiki"/>
</dbReference>
<dbReference type="GO" id="GO:0005886">
    <property type="term" value="C:plasma membrane"/>
    <property type="evidence" value="ECO:0000314"/>
    <property type="project" value="EcoCyc"/>
</dbReference>
<dbReference type="GO" id="GO:0005524">
    <property type="term" value="F:ATP binding"/>
    <property type="evidence" value="ECO:0007669"/>
    <property type="project" value="UniProtKB-UniRule"/>
</dbReference>
<dbReference type="GO" id="GO:0016301">
    <property type="term" value="F:kinase activity"/>
    <property type="evidence" value="ECO:0000314"/>
    <property type="project" value="EcoCyc"/>
</dbReference>
<dbReference type="GO" id="GO:0009029">
    <property type="term" value="F:tetraacyldisaccharide 4'-kinase activity"/>
    <property type="evidence" value="ECO:0000314"/>
    <property type="project" value="EcoliWiki"/>
</dbReference>
<dbReference type="GO" id="GO:0009245">
    <property type="term" value="P:lipid A biosynthetic process"/>
    <property type="evidence" value="ECO:0000314"/>
    <property type="project" value="EcoliWiki"/>
</dbReference>
<dbReference type="GO" id="GO:0009244">
    <property type="term" value="P:lipopolysaccharide core region biosynthetic process"/>
    <property type="evidence" value="ECO:0000315"/>
    <property type="project" value="EcoCyc"/>
</dbReference>
<dbReference type="HAMAP" id="MF_00409">
    <property type="entry name" value="LpxK"/>
    <property type="match status" value="1"/>
</dbReference>
<dbReference type="InterPro" id="IPR003758">
    <property type="entry name" value="LpxK"/>
</dbReference>
<dbReference type="InterPro" id="IPR027417">
    <property type="entry name" value="P-loop_NTPase"/>
</dbReference>
<dbReference type="NCBIfam" id="TIGR00682">
    <property type="entry name" value="lpxK"/>
    <property type="match status" value="1"/>
</dbReference>
<dbReference type="PANTHER" id="PTHR42724">
    <property type="entry name" value="TETRAACYLDISACCHARIDE 4'-KINASE"/>
    <property type="match status" value="1"/>
</dbReference>
<dbReference type="PANTHER" id="PTHR42724:SF1">
    <property type="entry name" value="TETRAACYLDISACCHARIDE 4'-KINASE, MITOCHONDRIAL-RELATED"/>
    <property type="match status" value="1"/>
</dbReference>
<dbReference type="Pfam" id="PF02606">
    <property type="entry name" value="LpxK"/>
    <property type="match status" value="1"/>
</dbReference>
<dbReference type="SUPFAM" id="SSF52540">
    <property type="entry name" value="P-loop containing nucleoside triphosphate hydrolases"/>
    <property type="match status" value="1"/>
</dbReference>
<proteinExistence type="evidence at protein level"/>
<protein>
    <recommendedName>
        <fullName>Tetraacyldisaccharide 4'-kinase</fullName>
        <ecNumber evidence="2">2.7.1.130</ecNumber>
    </recommendedName>
    <alternativeName>
        <fullName>Lipid A 4'-kinase</fullName>
    </alternativeName>
</protein>
<accession>P27300</accession>
<accession>P75842</accession>
<accession>Q9R7Q6</accession>
<reference key="1">
    <citation type="journal article" date="1993" name="Mol. Microbiol.">
        <title>The essential Escherichia coli msbA gene, a multicopy suppressor of null mutations in the htrB gene, is related to the universally conserved family of ATP-dependent translocators.</title>
        <authorList>
            <person name="Karow M.L."/>
            <person name="Georgopoulos C."/>
        </authorList>
    </citation>
    <scope>NUCLEOTIDE SEQUENCE [GENOMIC DNA]</scope>
    <source>
        <strain>K12</strain>
    </source>
</reference>
<reference key="2">
    <citation type="journal article" date="1996" name="DNA Res.">
        <title>A 718-kb DNA sequence of the Escherichia coli K-12 genome corresponding to the 12.7-28.0 min region on the linkage map.</title>
        <authorList>
            <person name="Oshima T."/>
            <person name="Aiba H."/>
            <person name="Baba T."/>
            <person name="Fujita K."/>
            <person name="Hayashi K."/>
            <person name="Honjo A."/>
            <person name="Ikemoto K."/>
            <person name="Inada T."/>
            <person name="Itoh T."/>
            <person name="Kajihara M."/>
            <person name="Kanai K."/>
            <person name="Kashimoto K."/>
            <person name="Kimura S."/>
            <person name="Kitagawa M."/>
            <person name="Makino K."/>
            <person name="Masuda S."/>
            <person name="Miki T."/>
            <person name="Mizobuchi K."/>
            <person name="Mori H."/>
            <person name="Motomura K."/>
            <person name="Nakamura Y."/>
            <person name="Nashimoto H."/>
            <person name="Nishio Y."/>
            <person name="Saito N."/>
            <person name="Sampei G."/>
            <person name="Seki Y."/>
            <person name="Tagami H."/>
            <person name="Takemoto K."/>
            <person name="Wada C."/>
            <person name="Yamamoto Y."/>
            <person name="Yano M."/>
            <person name="Horiuchi T."/>
        </authorList>
    </citation>
    <scope>NUCLEOTIDE SEQUENCE [LARGE SCALE GENOMIC DNA]</scope>
    <source>
        <strain>K12 / W3110 / ATCC 27325 / DSM 5911</strain>
    </source>
</reference>
<reference key="3">
    <citation type="journal article" date="1997" name="Science">
        <title>The complete genome sequence of Escherichia coli K-12.</title>
        <authorList>
            <person name="Blattner F.R."/>
            <person name="Plunkett G. III"/>
            <person name="Bloch C.A."/>
            <person name="Perna N.T."/>
            <person name="Burland V."/>
            <person name="Riley M."/>
            <person name="Collado-Vides J."/>
            <person name="Glasner J.D."/>
            <person name="Rode C.K."/>
            <person name="Mayhew G.F."/>
            <person name="Gregor J."/>
            <person name="Davis N.W."/>
            <person name="Kirkpatrick H.A."/>
            <person name="Goeden M.A."/>
            <person name="Rose D.J."/>
            <person name="Mau B."/>
            <person name="Shao Y."/>
        </authorList>
    </citation>
    <scope>NUCLEOTIDE SEQUENCE [LARGE SCALE GENOMIC DNA]</scope>
    <source>
        <strain>K12 / MG1655 / ATCC 47076</strain>
    </source>
</reference>
<reference key="4">
    <citation type="journal article" date="2006" name="Mol. Syst. Biol.">
        <title>Highly accurate genome sequences of Escherichia coli K-12 strains MG1655 and W3110.</title>
        <authorList>
            <person name="Hayashi K."/>
            <person name="Morooka N."/>
            <person name="Yamamoto Y."/>
            <person name="Fujita K."/>
            <person name="Isono K."/>
            <person name="Choi S."/>
            <person name="Ohtsubo E."/>
            <person name="Baba T."/>
            <person name="Wanner B.L."/>
            <person name="Mori H."/>
            <person name="Horiuchi T."/>
        </authorList>
    </citation>
    <scope>NUCLEOTIDE SEQUENCE [LARGE SCALE GENOMIC DNA]</scope>
    <source>
        <strain>K12 / W3110 / ATCC 27325 / DSM 5911</strain>
    </source>
</reference>
<reference key="5">
    <citation type="journal article" date="1997" name="J. Biol. Chem.">
        <title>Identification of the gene encoding the Escherichia coli lipid A 4'-kinase. Facile phosphorylation of endotoxin analogs with recombinant LpxK.</title>
        <authorList>
            <person name="Garrett T.A."/>
            <person name="Kadrmas J.L."/>
            <person name="Raetz C.R.H."/>
        </authorList>
    </citation>
    <scope>FUNCTION</scope>
    <scope>CATALYTIC ACTIVITY</scope>
</reference>
<reference key="6">
    <citation type="journal article" date="1998" name="J. Biol. Chem.">
        <title>Accumulation of a lipid A precursor lacking the 4'-phosphate following inactivation of the Escherichia coli lpxK gene.</title>
        <authorList>
            <person name="Garrett T.A."/>
            <person name="Que N.L."/>
            <person name="Raetz C.R.H."/>
        </authorList>
    </citation>
    <scope>FUNCTION</scope>
    <scope>CHARACTERIZATION</scope>
</reference>
<name>LPXK_ECOLI</name>
<gene>
    <name type="primary">lpxK</name>
    <name type="synonym">ycaH</name>
    <name type="ordered locus">b0915</name>
    <name type="ordered locus">JW0898</name>
</gene>
<evidence type="ECO:0000255" key="1"/>
<evidence type="ECO:0000269" key="2">
    <source>
    </source>
</evidence>
<evidence type="ECO:0000269" key="3">
    <source>
    </source>
</evidence>
<evidence type="ECO:0000305" key="4"/>
<comment type="function">
    <text evidence="2 3">Transfers the gamma-phosphate of ATP to the 4'-position of a tetraacyldisaccharide 1-phosphate intermediate (termed DS-1-P) to form tetraacyldisaccharide 1,4'-bis-phosphate (lipid IVA).</text>
</comment>
<comment type="catalytic activity">
    <reaction evidence="2">
        <text>lipid A disaccharide (E. coli) + ATP = lipid IVA (E. coli) + ADP + H(+)</text>
        <dbReference type="Rhea" id="RHEA:20700"/>
        <dbReference type="ChEBI" id="CHEBI:15378"/>
        <dbReference type="ChEBI" id="CHEBI:30616"/>
        <dbReference type="ChEBI" id="CHEBI:58466"/>
        <dbReference type="ChEBI" id="CHEBI:58603"/>
        <dbReference type="ChEBI" id="CHEBI:456216"/>
        <dbReference type="EC" id="2.7.1.130"/>
    </reaction>
</comment>
<comment type="pathway">
    <text>Glycolipid biosynthesis; lipid IV(A) biosynthesis; lipid IV(A) from (3R)-3-hydroxytetradecanoyl-[acyl-carrier-protein] and UDP-N-acetyl-alpha-D-glucosamine: step 6/6.</text>
</comment>
<comment type="similarity">
    <text evidence="4">Belongs to the LpxK family.</text>
</comment>